<feature type="chain" id="PRO_0000097524" description="Replication termination protein">
    <location>
        <begin position="1"/>
        <end position="122"/>
    </location>
</feature>
<keyword id="KW-0238">DNA-binding</keyword>
<gene>
    <name type="primary">rtp</name>
</gene>
<protein>
    <recommendedName>
        <fullName>Replication termination protein</fullName>
    </recommendedName>
    <alternativeName>
        <fullName>Replication terminator protein</fullName>
    </alternativeName>
</protein>
<comment type="function">
    <text evidence="1">Plays a role in DNA replication and termination (fork arrest mechanism). Two dimers of rtp bind to the two inverted repeat regions (IRI and IRII) present in the termination site. The binding of each dimer is centered on an 8 bp direct repeat (By similarity).</text>
</comment>
<comment type="subunit">
    <text evidence="1">Homodimer.</text>
</comment>
<accession>P68733</accession>
<accession>P14382</accession>
<proteinExistence type="inferred from homology"/>
<name>RTP_BACVA</name>
<reference key="1">
    <citation type="journal article" date="1998" name="J. Bacteriol.">
        <title>Replication terminator protein-based replication fork-arrest systems in various Bacillus species.</title>
        <authorList>
            <person name="Griffiths A.A."/>
            <person name="Andersen P.A."/>
            <person name="Wake R.G."/>
        </authorList>
    </citation>
    <scope>NUCLEOTIDE SEQUENCE [GENOMIC DNA]</scope>
    <source>
        <strain>DV1-F-3</strain>
    </source>
</reference>
<dbReference type="EMBL" id="AF045054">
    <property type="protein sequence ID" value="AAC38659.1"/>
    <property type="molecule type" value="Genomic_DNA"/>
</dbReference>
<dbReference type="RefSeq" id="WP_003220337.1">
    <property type="nucleotide sequence ID" value="NZ_NXEM01000022.1"/>
</dbReference>
<dbReference type="BMRB" id="P68733"/>
<dbReference type="SMR" id="P68733"/>
<dbReference type="GeneID" id="76986963"/>
<dbReference type="OrthoDB" id="2438867at2"/>
<dbReference type="GO" id="GO:0003677">
    <property type="term" value="F:DNA binding"/>
    <property type="evidence" value="ECO:0007669"/>
    <property type="project" value="UniProtKB-KW"/>
</dbReference>
<dbReference type="GO" id="GO:0006274">
    <property type="term" value="P:DNA replication termination"/>
    <property type="evidence" value="ECO:0007669"/>
    <property type="project" value="InterPro"/>
</dbReference>
<dbReference type="Gene3D" id="1.10.10.10">
    <property type="entry name" value="Winged helix-like DNA-binding domain superfamily/Winged helix DNA-binding domain"/>
    <property type="match status" value="1"/>
</dbReference>
<dbReference type="InterPro" id="IPR003432">
    <property type="entry name" value="RTP"/>
</dbReference>
<dbReference type="InterPro" id="IPR036388">
    <property type="entry name" value="WH-like_DNA-bd_sf"/>
</dbReference>
<dbReference type="InterPro" id="IPR036390">
    <property type="entry name" value="WH_DNA-bd_sf"/>
</dbReference>
<dbReference type="Pfam" id="PF02334">
    <property type="entry name" value="RTP"/>
    <property type="match status" value="1"/>
</dbReference>
<dbReference type="PIRSF" id="PIRSF021424">
    <property type="entry name" value="RTP"/>
    <property type="match status" value="1"/>
</dbReference>
<dbReference type="SUPFAM" id="SSF46785">
    <property type="entry name" value="Winged helix' DNA-binding domain"/>
    <property type="match status" value="1"/>
</dbReference>
<sequence length="122" mass="14519">MKEEKRSSTGFLVKQRAFLKLYMITMTEQERLYGLKLLEVLRSEFKEIGFKPNHTEVYRSLHELLDDGILKQIKVKKEGAKLQEVVLYQFKDYEAAKLYKKQLKVELDRCKKLIEKALSDNF</sequence>
<organism>
    <name type="scientific">Bacillus vallismortis</name>
    <dbReference type="NCBI Taxonomy" id="72361"/>
    <lineage>
        <taxon>Bacteria</taxon>
        <taxon>Bacillati</taxon>
        <taxon>Bacillota</taxon>
        <taxon>Bacilli</taxon>
        <taxon>Bacillales</taxon>
        <taxon>Bacillaceae</taxon>
        <taxon>Bacillus</taxon>
    </lineage>
</organism>
<evidence type="ECO:0000250" key="1"/>